<name>MRAZ_ACTP2</name>
<protein>
    <recommendedName>
        <fullName>Transcriptional regulator MraZ</fullName>
    </recommendedName>
</protein>
<evidence type="ECO:0000255" key="1">
    <source>
        <dbReference type="HAMAP-Rule" id="MF_01008"/>
    </source>
</evidence>
<evidence type="ECO:0000255" key="2">
    <source>
        <dbReference type="PROSITE-ProRule" id="PRU01076"/>
    </source>
</evidence>
<feature type="chain" id="PRO_1000062839" description="Transcriptional regulator MraZ">
    <location>
        <begin position="1"/>
        <end position="152"/>
    </location>
</feature>
<feature type="domain" description="SpoVT-AbrB 1" evidence="2">
    <location>
        <begin position="5"/>
        <end position="52"/>
    </location>
</feature>
<feature type="domain" description="SpoVT-AbrB 2" evidence="2">
    <location>
        <begin position="81"/>
        <end position="124"/>
    </location>
</feature>
<comment type="subunit">
    <text evidence="1">Forms oligomers.</text>
</comment>
<comment type="subcellular location">
    <subcellularLocation>
        <location evidence="1">Cytoplasm</location>
        <location evidence="1">Nucleoid</location>
    </subcellularLocation>
</comment>
<comment type="similarity">
    <text evidence="1">Belongs to the MraZ family.</text>
</comment>
<reference key="1">
    <citation type="journal article" date="2008" name="J. Bacteriol.">
        <title>The complete genome sequence of Actinobacillus pleuropneumoniae L20 (serotype 5b).</title>
        <authorList>
            <person name="Foote S.J."/>
            <person name="Bosse J.T."/>
            <person name="Bouevitch A.B."/>
            <person name="Langford P.R."/>
            <person name="Young N.M."/>
            <person name="Nash J.H.E."/>
        </authorList>
    </citation>
    <scope>NUCLEOTIDE SEQUENCE [LARGE SCALE GENOMIC DNA]</scope>
    <source>
        <strain>L20</strain>
    </source>
</reference>
<organism>
    <name type="scientific">Actinobacillus pleuropneumoniae serotype 5b (strain L20)</name>
    <dbReference type="NCBI Taxonomy" id="416269"/>
    <lineage>
        <taxon>Bacteria</taxon>
        <taxon>Pseudomonadati</taxon>
        <taxon>Pseudomonadota</taxon>
        <taxon>Gammaproteobacteria</taxon>
        <taxon>Pasteurellales</taxon>
        <taxon>Pasteurellaceae</taxon>
        <taxon>Actinobacillus</taxon>
    </lineage>
</organism>
<dbReference type="EMBL" id="CP000569">
    <property type="protein sequence ID" value="ABN73117.1"/>
    <property type="molecule type" value="Genomic_DNA"/>
</dbReference>
<dbReference type="RefSeq" id="WP_005616487.1">
    <property type="nucleotide sequence ID" value="NC_009053.1"/>
</dbReference>
<dbReference type="SMR" id="A3MY81"/>
<dbReference type="STRING" id="416269.APL_0009"/>
<dbReference type="EnsemblBacteria" id="ABN73117">
    <property type="protein sequence ID" value="ABN73117"/>
    <property type="gene ID" value="APL_0009"/>
</dbReference>
<dbReference type="KEGG" id="apl:APL_0009"/>
<dbReference type="eggNOG" id="COG2001">
    <property type="taxonomic scope" value="Bacteria"/>
</dbReference>
<dbReference type="HOGENOM" id="CLU_107907_2_0_6"/>
<dbReference type="Proteomes" id="UP000001432">
    <property type="component" value="Chromosome"/>
</dbReference>
<dbReference type="GO" id="GO:0005737">
    <property type="term" value="C:cytoplasm"/>
    <property type="evidence" value="ECO:0007669"/>
    <property type="project" value="UniProtKB-UniRule"/>
</dbReference>
<dbReference type="GO" id="GO:0009295">
    <property type="term" value="C:nucleoid"/>
    <property type="evidence" value="ECO:0007669"/>
    <property type="project" value="UniProtKB-SubCell"/>
</dbReference>
<dbReference type="GO" id="GO:0003700">
    <property type="term" value="F:DNA-binding transcription factor activity"/>
    <property type="evidence" value="ECO:0007669"/>
    <property type="project" value="UniProtKB-UniRule"/>
</dbReference>
<dbReference type="GO" id="GO:0000976">
    <property type="term" value="F:transcription cis-regulatory region binding"/>
    <property type="evidence" value="ECO:0007669"/>
    <property type="project" value="TreeGrafter"/>
</dbReference>
<dbReference type="GO" id="GO:2000143">
    <property type="term" value="P:negative regulation of DNA-templated transcription initiation"/>
    <property type="evidence" value="ECO:0007669"/>
    <property type="project" value="TreeGrafter"/>
</dbReference>
<dbReference type="CDD" id="cd16321">
    <property type="entry name" value="MraZ_C"/>
    <property type="match status" value="1"/>
</dbReference>
<dbReference type="CDD" id="cd16320">
    <property type="entry name" value="MraZ_N"/>
    <property type="match status" value="1"/>
</dbReference>
<dbReference type="Gene3D" id="3.40.1550.20">
    <property type="entry name" value="Transcriptional regulator MraZ domain"/>
    <property type="match status" value="1"/>
</dbReference>
<dbReference type="HAMAP" id="MF_01008">
    <property type="entry name" value="MraZ"/>
    <property type="match status" value="1"/>
</dbReference>
<dbReference type="InterPro" id="IPR003444">
    <property type="entry name" value="MraZ"/>
</dbReference>
<dbReference type="InterPro" id="IPR035644">
    <property type="entry name" value="MraZ_C"/>
</dbReference>
<dbReference type="InterPro" id="IPR020603">
    <property type="entry name" value="MraZ_dom"/>
</dbReference>
<dbReference type="InterPro" id="IPR035642">
    <property type="entry name" value="MraZ_N"/>
</dbReference>
<dbReference type="InterPro" id="IPR038619">
    <property type="entry name" value="MraZ_sf"/>
</dbReference>
<dbReference type="InterPro" id="IPR007159">
    <property type="entry name" value="SpoVT-AbrB_dom"/>
</dbReference>
<dbReference type="InterPro" id="IPR037914">
    <property type="entry name" value="SpoVT-AbrB_sf"/>
</dbReference>
<dbReference type="NCBIfam" id="TIGR00242">
    <property type="entry name" value="division/cell wall cluster transcriptional repressor MraZ"/>
    <property type="match status" value="1"/>
</dbReference>
<dbReference type="PANTHER" id="PTHR34701">
    <property type="entry name" value="TRANSCRIPTIONAL REGULATOR MRAZ"/>
    <property type="match status" value="1"/>
</dbReference>
<dbReference type="PANTHER" id="PTHR34701:SF1">
    <property type="entry name" value="TRANSCRIPTIONAL REGULATOR MRAZ"/>
    <property type="match status" value="1"/>
</dbReference>
<dbReference type="Pfam" id="PF02381">
    <property type="entry name" value="MraZ"/>
    <property type="match status" value="2"/>
</dbReference>
<dbReference type="SUPFAM" id="SSF89447">
    <property type="entry name" value="AbrB/MazE/MraZ-like"/>
    <property type="match status" value="1"/>
</dbReference>
<dbReference type="PROSITE" id="PS51740">
    <property type="entry name" value="SPOVT_ABRB"/>
    <property type="match status" value="2"/>
</dbReference>
<proteinExistence type="inferred from homology"/>
<keyword id="KW-0963">Cytoplasm</keyword>
<keyword id="KW-0238">DNA-binding</keyword>
<keyword id="KW-1185">Reference proteome</keyword>
<keyword id="KW-0677">Repeat</keyword>
<keyword id="KW-0804">Transcription</keyword>
<keyword id="KW-0805">Transcription regulation</keyword>
<accession>A3MY81</accession>
<sequence length="152" mass="17479">MFRGVTSISIDNKGRIAIPTRYRAELREQHEGVLVCTVDIRQPCLLLYPLHEWETVEQKLLALSNFEPMQRRIQRVMQGFATECEMDAAGRILLSPTLRQHAQLEQQIMLVGQLNKFEIWQDKQWQSQIAEDLALGGSAEMLNCEALKNLSL</sequence>
<gene>
    <name evidence="1" type="primary">mraZ</name>
    <name type="ordered locus">APL_0009</name>
</gene>